<name>GLMU_DECAR</name>
<proteinExistence type="inferred from homology"/>
<keyword id="KW-0012">Acyltransferase</keyword>
<keyword id="KW-0133">Cell shape</keyword>
<keyword id="KW-0961">Cell wall biogenesis/degradation</keyword>
<keyword id="KW-0963">Cytoplasm</keyword>
<keyword id="KW-0460">Magnesium</keyword>
<keyword id="KW-0479">Metal-binding</keyword>
<keyword id="KW-0511">Multifunctional enzyme</keyword>
<keyword id="KW-0548">Nucleotidyltransferase</keyword>
<keyword id="KW-0573">Peptidoglycan synthesis</keyword>
<keyword id="KW-0677">Repeat</keyword>
<keyword id="KW-0808">Transferase</keyword>
<evidence type="ECO:0000255" key="1">
    <source>
        <dbReference type="HAMAP-Rule" id="MF_01631"/>
    </source>
</evidence>
<comment type="function">
    <text evidence="1">Catalyzes the last two sequential reactions in the de novo biosynthetic pathway for UDP-N-acetylglucosamine (UDP-GlcNAc). The C-terminal domain catalyzes the transfer of acetyl group from acetyl coenzyme A to glucosamine-1-phosphate (GlcN-1-P) to produce N-acetylglucosamine-1-phosphate (GlcNAc-1-P), which is converted into UDP-GlcNAc by the transfer of uridine 5-monophosphate (from uridine 5-triphosphate), a reaction catalyzed by the N-terminal domain.</text>
</comment>
<comment type="catalytic activity">
    <reaction evidence="1">
        <text>alpha-D-glucosamine 1-phosphate + acetyl-CoA = N-acetyl-alpha-D-glucosamine 1-phosphate + CoA + H(+)</text>
        <dbReference type="Rhea" id="RHEA:13725"/>
        <dbReference type="ChEBI" id="CHEBI:15378"/>
        <dbReference type="ChEBI" id="CHEBI:57287"/>
        <dbReference type="ChEBI" id="CHEBI:57288"/>
        <dbReference type="ChEBI" id="CHEBI:57776"/>
        <dbReference type="ChEBI" id="CHEBI:58516"/>
        <dbReference type="EC" id="2.3.1.157"/>
    </reaction>
</comment>
<comment type="catalytic activity">
    <reaction evidence="1">
        <text>N-acetyl-alpha-D-glucosamine 1-phosphate + UTP + H(+) = UDP-N-acetyl-alpha-D-glucosamine + diphosphate</text>
        <dbReference type="Rhea" id="RHEA:13509"/>
        <dbReference type="ChEBI" id="CHEBI:15378"/>
        <dbReference type="ChEBI" id="CHEBI:33019"/>
        <dbReference type="ChEBI" id="CHEBI:46398"/>
        <dbReference type="ChEBI" id="CHEBI:57705"/>
        <dbReference type="ChEBI" id="CHEBI:57776"/>
        <dbReference type="EC" id="2.7.7.23"/>
    </reaction>
</comment>
<comment type="cofactor">
    <cofactor evidence="1">
        <name>Mg(2+)</name>
        <dbReference type="ChEBI" id="CHEBI:18420"/>
    </cofactor>
    <text evidence="1">Binds 1 Mg(2+) ion per subunit.</text>
</comment>
<comment type="pathway">
    <text evidence="1">Nucleotide-sugar biosynthesis; UDP-N-acetyl-alpha-D-glucosamine biosynthesis; N-acetyl-alpha-D-glucosamine 1-phosphate from alpha-D-glucosamine 6-phosphate (route II): step 2/2.</text>
</comment>
<comment type="pathway">
    <text evidence="1">Nucleotide-sugar biosynthesis; UDP-N-acetyl-alpha-D-glucosamine biosynthesis; UDP-N-acetyl-alpha-D-glucosamine from N-acetyl-alpha-D-glucosamine 1-phosphate: step 1/1.</text>
</comment>
<comment type="pathway">
    <text evidence="1">Bacterial outer membrane biogenesis; LPS lipid A biosynthesis.</text>
</comment>
<comment type="subunit">
    <text evidence="1">Homotrimer.</text>
</comment>
<comment type="subcellular location">
    <subcellularLocation>
        <location evidence="1">Cytoplasm</location>
    </subcellularLocation>
</comment>
<comment type="similarity">
    <text evidence="1">In the N-terminal section; belongs to the N-acetylglucosamine-1-phosphate uridyltransferase family.</text>
</comment>
<comment type="similarity">
    <text evidence="1">In the C-terminal section; belongs to the transferase hexapeptide repeat family.</text>
</comment>
<gene>
    <name evidence="1" type="primary">glmU</name>
    <name type="ordered locus">Daro_0220</name>
</gene>
<accession>Q47JK2</accession>
<organism>
    <name type="scientific">Dechloromonas aromatica (strain RCB)</name>
    <dbReference type="NCBI Taxonomy" id="159087"/>
    <lineage>
        <taxon>Bacteria</taxon>
        <taxon>Pseudomonadati</taxon>
        <taxon>Pseudomonadota</taxon>
        <taxon>Betaproteobacteria</taxon>
        <taxon>Rhodocyclales</taxon>
        <taxon>Azonexaceae</taxon>
        <taxon>Dechloromonas</taxon>
    </lineage>
</organism>
<reference key="1">
    <citation type="journal article" date="2009" name="BMC Genomics">
        <title>Metabolic analysis of the soil microbe Dechloromonas aromatica str. RCB: indications of a surprisingly complex life-style and cryptic anaerobic pathways for aromatic degradation.</title>
        <authorList>
            <person name="Salinero K.K."/>
            <person name="Keller K."/>
            <person name="Feil W.S."/>
            <person name="Feil H."/>
            <person name="Trong S."/>
            <person name="Di Bartolo G."/>
            <person name="Lapidus A."/>
        </authorList>
    </citation>
    <scope>NUCLEOTIDE SEQUENCE [LARGE SCALE GENOMIC DNA]</scope>
    <source>
        <strain>RCB</strain>
    </source>
</reference>
<protein>
    <recommendedName>
        <fullName evidence="1">Bifunctional protein GlmU</fullName>
    </recommendedName>
    <domain>
        <recommendedName>
            <fullName evidence="1">UDP-N-acetylglucosamine pyrophosphorylase</fullName>
            <ecNumber evidence="1">2.7.7.23</ecNumber>
        </recommendedName>
        <alternativeName>
            <fullName evidence="1">N-acetylglucosamine-1-phosphate uridyltransferase</fullName>
        </alternativeName>
    </domain>
    <domain>
        <recommendedName>
            <fullName evidence="1">Glucosamine-1-phosphate N-acetyltransferase</fullName>
            <ecNumber evidence="1">2.3.1.157</ecNumber>
        </recommendedName>
    </domain>
</protein>
<dbReference type="EC" id="2.7.7.23" evidence="1"/>
<dbReference type="EC" id="2.3.1.157" evidence="1"/>
<dbReference type="EMBL" id="CP000089">
    <property type="protein sequence ID" value="AAZ44979.1"/>
    <property type="molecule type" value="Genomic_DNA"/>
</dbReference>
<dbReference type="SMR" id="Q47JK2"/>
<dbReference type="STRING" id="159087.Daro_0220"/>
<dbReference type="KEGG" id="dar:Daro_0220"/>
<dbReference type="eggNOG" id="COG1207">
    <property type="taxonomic scope" value="Bacteria"/>
</dbReference>
<dbReference type="HOGENOM" id="CLU_029499_15_2_4"/>
<dbReference type="OrthoDB" id="9775031at2"/>
<dbReference type="UniPathway" id="UPA00113">
    <property type="reaction ID" value="UER00532"/>
</dbReference>
<dbReference type="UniPathway" id="UPA00113">
    <property type="reaction ID" value="UER00533"/>
</dbReference>
<dbReference type="UniPathway" id="UPA00973"/>
<dbReference type="GO" id="GO:0005737">
    <property type="term" value="C:cytoplasm"/>
    <property type="evidence" value="ECO:0007669"/>
    <property type="project" value="UniProtKB-SubCell"/>
</dbReference>
<dbReference type="GO" id="GO:0016020">
    <property type="term" value="C:membrane"/>
    <property type="evidence" value="ECO:0007669"/>
    <property type="project" value="GOC"/>
</dbReference>
<dbReference type="GO" id="GO:0019134">
    <property type="term" value="F:glucosamine-1-phosphate N-acetyltransferase activity"/>
    <property type="evidence" value="ECO:0007669"/>
    <property type="project" value="UniProtKB-UniRule"/>
</dbReference>
<dbReference type="GO" id="GO:0000287">
    <property type="term" value="F:magnesium ion binding"/>
    <property type="evidence" value="ECO:0007669"/>
    <property type="project" value="UniProtKB-UniRule"/>
</dbReference>
<dbReference type="GO" id="GO:0003977">
    <property type="term" value="F:UDP-N-acetylglucosamine diphosphorylase activity"/>
    <property type="evidence" value="ECO:0007669"/>
    <property type="project" value="UniProtKB-UniRule"/>
</dbReference>
<dbReference type="GO" id="GO:0000902">
    <property type="term" value="P:cell morphogenesis"/>
    <property type="evidence" value="ECO:0007669"/>
    <property type="project" value="UniProtKB-UniRule"/>
</dbReference>
<dbReference type="GO" id="GO:0071555">
    <property type="term" value="P:cell wall organization"/>
    <property type="evidence" value="ECO:0007669"/>
    <property type="project" value="UniProtKB-KW"/>
</dbReference>
<dbReference type="GO" id="GO:0009245">
    <property type="term" value="P:lipid A biosynthetic process"/>
    <property type="evidence" value="ECO:0007669"/>
    <property type="project" value="UniProtKB-UniRule"/>
</dbReference>
<dbReference type="GO" id="GO:0009252">
    <property type="term" value="P:peptidoglycan biosynthetic process"/>
    <property type="evidence" value="ECO:0007669"/>
    <property type="project" value="UniProtKB-UniRule"/>
</dbReference>
<dbReference type="GO" id="GO:0008360">
    <property type="term" value="P:regulation of cell shape"/>
    <property type="evidence" value="ECO:0007669"/>
    <property type="project" value="UniProtKB-KW"/>
</dbReference>
<dbReference type="GO" id="GO:0006048">
    <property type="term" value="P:UDP-N-acetylglucosamine biosynthetic process"/>
    <property type="evidence" value="ECO:0007669"/>
    <property type="project" value="UniProtKB-UniPathway"/>
</dbReference>
<dbReference type="CDD" id="cd02540">
    <property type="entry name" value="GT2_GlmU_N_bac"/>
    <property type="match status" value="1"/>
</dbReference>
<dbReference type="CDD" id="cd03353">
    <property type="entry name" value="LbH_GlmU_C"/>
    <property type="match status" value="1"/>
</dbReference>
<dbReference type="Gene3D" id="2.160.10.10">
    <property type="entry name" value="Hexapeptide repeat proteins"/>
    <property type="match status" value="1"/>
</dbReference>
<dbReference type="Gene3D" id="3.90.550.10">
    <property type="entry name" value="Spore Coat Polysaccharide Biosynthesis Protein SpsA, Chain A"/>
    <property type="match status" value="1"/>
</dbReference>
<dbReference type="HAMAP" id="MF_01631">
    <property type="entry name" value="GlmU"/>
    <property type="match status" value="1"/>
</dbReference>
<dbReference type="InterPro" id="IPR005882">
    <property type="entry name" value="Bifunctional_GlmU"/>
</dbReference>
<dbReference type="InterPro" id="IPR050065">
    <property type="entry name" value="GlmU-like"/>
</dbReference>
<dbReference type="InterPro" id="IPR038009">
    <property type="entry name" value="GlmU_C_LbH"/>
</dbReference>
<dbReference type="InterPro" id="IPR001451">
    <property type="entry name" value="Hexapep"/>
</dbReference>
<dbReference type="InterPro" id="IPR025877">
    <property type="entry name" value="MobA-like_NTP_Trfase"/>
</dbReference>
<dbReference type="InterPro" id="IPR029044">
    <property type="entry name" value="Nucleotide-diphossugar_trans"/>
</dbReference>
<dbReference type="InterPro" id="IPR011004">
    <property type="entry name" value="Trimer_LpxA-like_sf"/>
</dbReference>
<dbReference type="NCBIfam" id="TIGR01173">
    <property type="entry name" value="glmU"/>
    <property type="match status" value="1"/>
</dbReference>
<dbReference type="PANTHER" id="PTHR43584:SF3">
    <property type="entry name" value="BIFUNCTIONAL PROTEIN GLMU"/>
    <property type="match status" value="1"/>
</dbReference>
<dbReference type="PANTHER" id="PTHR43584">
    <property type="entry name" value="NUCLEOTIDYL TRANSFERASE"/>
    <property type="match status" value="1"/>
</dbReference>
<dbReference type="Pfam" id="PF00132">
    <property type="entry name" value="Hexapep"/>
    <property type="match status" value="1"/>
</dbReference>
<dbReference type="Pfam" id="PF12804">
    <property type="entry name" value="NTP_transf_3"/>
    <property type="match status" value="1"/>
</dbReference>
<dbReference type="SUPFAM" id="SSF53448">
    <property type="entry name" value="Nucleotide-diphospho-sugar transferases"/>
    <property type="match status" value="1"/>
</dbReference>
<dbReference type="SUPFAM" id="SSF51161">
    <property type="entry name" value="Trimeric LpxA-like enzymes"/>
    <property type="match status" value="1"/>
</dbReference>
<feature type="chain" id="PRO_0000233765" description="Bifunctional protein GlmU">
    <location>
        <begin position="1"/>
        <end position="452"/>
    </location>
</feature>
<feature type="region of interest" description="Pyrophosphorylase" evidence="1">
    <location>
        <begin position="1"/>
        <end position="224"/>
    </location>
</feature>
<feature type="region of interest" description="Linker" evidence="1">
    <location>
        <begin position="225"/>
        <end position="245"/>
    </location>
</feature>
<feature type="region of interest" description="N-acetyltransferase" evidence="1">
    <location>
        <begin position="246"/>
        <end position="452"/>
    </location>
</feature>
<feature type="active site" description="Proton acceptor" evidence="1">
    <location>
        <position position="358"/>
    </location>
</feature>
<feature type="binding site" evidence="1">
    <location>
        <begin position="6"/>
        <end position="9"/>
    </location>
    <ligand>
        <name>UDP-N-acetyl-alpha-D-glucosamine</name>
        <dbReference type="ChEBI" id="CHEBI:57705"/>
    </ligand>
</feature>
<feature type="binding site" evidence="1">
    <location>
        <position position="20"/>
    </location>
    <ligand>
        <name>UDP-N-acetyl-alpha-D-glucosamine</name>
        <dbReference type="ChEBI" id="CHEBI:57705"/>
    </ligand>
</feature>
<feature type="binding site" evidence="1">
    <location>
        <position position="71"/>
    </location>
    <ligand>
        <name>UDP-N-acetyl-alpha-D-glucosamine</name>
        <dbReference type="ChEBI" id="CHEBI:57705"/>
    </ligand>
</feature>
<feature type="binding site" evidence="1">
    <location>
        <begin position="76"/>
        <end position="77"/>
    </location>
    <ligand>
        <name>UDP-N-acetyl-alpha-D-glucosamine</name>
        <dbReference type="ChEBI" id="CHEBI:57705"/>
    </ligand>
</feature>
<feature type="binding site" evidence="1">
    <location>
        <begin position="98"/>
        <end position="100"/>
    </location>
    <ligand>
        <name>UDP-N-acetyl-alpha-D-glucosamine</name>
        <dbReference type="ChEBI" id="CHEBI:57705"/>
    </ligand>
</feature>
<feature type="binding site" evidence="1">
    <location>
        <position position="100"/>
    </location>
    <ligand>
        <name>Mg(2+)</name>
        <dbReference type="ChEBI" id="CHEBI:18420"/>
    </ligand>
</feature>
<feature type="binding site" evidence="1">
    <location>
        <position position="134"/>
    </location>
    <ligand>
        <name>UDP-N-acetyl-alpha-D-glucosamine</name>
        <dbReference type="ChEBI" id="CHEBI:57705"/>
    </ligand>
</feature>
<feature type="binding site" evidence="1">
    <location>
        <position position="149"/>
    </location>
    <ligand>
        <name>UDP-N-acetyl-alpha-D-glucosamine</name>
        <dbReference type="ChEBI" id="CHEBI:57705"/>
    </ligand>
</feature>
<feature type="binding site" evidence="1">
    <location>
        <position position="164"/>
    </location>
    <ligand>
        <name>UDP-N-acetyl-alpha-D-glucosamine</name>
        <dbReference type="ChEBI" id="CHEBI:57705"/>
    </ligand>
</feature>
<feature type="binding site" evidence="1">
    <location>
        <position position="222"/>
    </location>
    <ligand>
        <name>Mg(2+)</name>
        <dbReference type="ChEBI" id="CHEBI:18420"/>
    </ligand>
</feature>
<feature type="binding site" evidence="1">
    <location>
        <position position="222"/>
    </location>
    <ligand>
        <name>UDP-N-acetyl-alpha-D-glucosamine</name>
        <dbReference type="ChEBI" id="CHEBI:57705"/>
    </ligand>
</feature>
<feature type="binding site" evidence="1">
    <location>
        <position position="328"/>
    </location>
    <ligand>
        <name>UDP-N-acetyl-alpha-D-glucosamine</name>
        <dbReference type="ChEBI" id="CHEBI:57705"/>
    </ligand>
</feature>
<feature type="binding site" evidence="1">
    <location>
        <position position="346"/>
    </location>
    <ligand>
        <name>UDP-N-acetyl-alpha-D-glucosamine</name>
        <dbReference type="ChEBI" id="CHEBI:57705"/>
    </ligand>
</feature>
<feature type="binding site" evidence="1">
    <location>
        <position position="361"/>
    </location>
    <ligand>
        <name>UDP-N-acetyl-alpha-D-glucosamine</name>
        <dbReference type="ChEBI" id="CHEBI:57705"/>
    </ligand>
</feature>
<feature type="binding site" evidence="1">
    <location>
        <position position="372"/>
    </location>
    <ligand>
        <name>UDP-N-acetyl-alpha-D-glucosamine</name>
        <dbReference type="ChEBI" id="CHEBI:57705"/>
    </ligand>
</feature>
<feature type="binding site" evidence="1">
    <location>
        <position position="375"/>
    </location>
    <ligand>
        <name>acetyl-CoA</name>
        <dbReference type="ChEBI" id="CHEBI:57288"/>
    </ligand>
</feature>
<feature type="binding site" evidence="1">
    <location>
        <begin position="381"/>
        <end position="382"/>
    </location>
    <ligand>
        <name>acetyl-CoA</name>
        <dbReference type="ChEBI" id="CHEBI:57288"/>
    </ligand>
</feature>
<feature type="binding site" evidence="1">
    <location>
        <position position="400"/>
    </location>
    <ligand>
        <name>acetyl-CoA</name>
        <dbReference type="ChEBI" id="CHEBI:57288"/>
    </ligand>
</feature>
<feature type="binding site" evidence="1">
    <location>
        <position position="418"/>
    </location>
    <ligand>
        <name>acetyl-CoA</name>
        <dbReference type="ChEBI" id="CHEBI:57288"/>
    </ligand>
</feature>
<feature type="binding site" evidence="1">
    <location>
        <position position="435"/>
    </location>
    <ligand>
        <name>acetyl-CoA</name>
        <dbReference type="ChEBI" id="CHEBI:57288"/>
    </ligand>
</feature>
<sequence>MNIVILAAGQGKRMHSNLPKVLHPIAGKPLAQHVIDTARQLSPEKLIVVYGHGGEVVRSTLAAPDLSWAEQAQQLGTGHAVAQALSELGSAAQTLVLYGDVPLTTVATLKRLLQAGKDALSVLTVDLANPSGYGRIVRDGAGNMISIVEEKDASAEQKAIREVNTGIMAVPTARLADWLGKLKNDNAQGEYYLTDIIALAVAEGMPVRTAQPEGEWEVLGVNSKVQLAELERQHQLNLAGELLVAGVRLADPARIDIRGELTHGRDVAIDVGCVFEGKVELADAVEVGPYCVLKNVKVGAGTRIAAFCHFEDAVIGPDGVLGPYARLRPGTELGPEVHIGNFVEVKKSIIGAQSKANHLAYIGDAEIGQRVNVGAGTITCNYDGANKFKTVIEDDVFIGSDTQLVAPVTVGRGATLGAGTTLTKDAPPDALTFSRPRQMTLPGWERPKKVKK</sequence>